<feature type="chain" id="PRO_0000069496" description="Gonadotropin-releasing hormone II receptor">
    <location>
        <begin position="1"/>
        <end position="379"/>
    </location>
</feature>
<feature type="topological domain" description="Extracellular" evidence="1">
    <location>
        <begin position="1"/>
        <end position="45"/>
    </location>
</feature>
<feature type="transmembrane region" description="Helical; Name=1" evidence="1">
    <location>
        <begin position="46"/>
        <end position="65"/>
    </location>
</feature>
<feature type="topological domain" description="Cytoplasmic" evidence="1">
    <location>
        <begin position="66"/>
        <end position="80"/>
    </location>
</feature>
<feature type="transmembrane region" description="Helical; Name=2" evidence="1">
    <location>
        <begin position="81"/>
        <end position="100"/>
    </location>
</feature>
<feature type="topological domain" description="Extracellular" evidence="1">
    <location>
        <begin position="101"/>
        <end position="118"/>
    </location>
</feature>
<feature type="transmembrane region" description="Helical; Name=3" evidence="1">
    <location>
        <begin position="119"/>
        <end position="140"/>
    </location>
</feature>
<feature type="topological domain" description="Cytoplasmic" evidence="1">
    <location>
        <begin position="141"/>
        <end position="167"/>
    </location>
</feature>
<feature type="transmembrane region" description="Helical; Name=4" evidence="1">
    <location>
        <begin position="168"/>
        <end position="184"/>
    </location>
</feature>
<feature type="topological domain" description="Extracellular" evidence="1">
    <location>
        <begin position="185"/>
        <end position="210"/>
    </location>
</feature>
<feature type="transmembrane region" description="Helical; Name=5" evidence="1">
    <location>
        <begin position="211"/>
        <end position="230"/>
    </location>
</feature>
<feature type="topological domain" description="Cytoplasmic" evidence="1">
    <location>
        <begin position="231"/>
        <end position="283"/>
    </location>
</feature>
<feature type="transmembrane region" description="Helical; Name=6" evidence="1">
    <location>
        <begin position="284"/>
        <end position="302"/>
    </location>
</feature>
<feature type="topological domain" description="Extracellular" evidence="1">
    <location>
        <begin position="303"/>
        <end position="308"/>
    </location>
</feature>
<feature type="transmembrane region" description="Helical; Name=7" evidence="1">
    <location>
        <begin position="309"/>
        <end position="328"/>
    </location>
</feature>
<feature type="topological domain" description="Cytoplasmic" evidence="1">
    <location>
        <begin position="329"/>
        <end position="379"/>
    </location>
</feature>
<feature type="region of interest" description="Disordered" evidence="3">
    <location>
        <begin position="355"/>
        <end position="379"/>
    </location>
</feature>
<feature type="glycosylation site" description="N-linked (GlcNAc...) asparagine" evidence="1">
    <location>
        <position position="4"/>
    </location>
</feature>
<feature type="glycosylation site" description="N-linked (GlcNAc...) asparagine" evidence="1">
    <location>
        <position position="18"/>
    </location>
</feature>
<feature type="glycosylation site" description="N-linked (GlcNAc...) asparagine" evidence="1">
    <location>
        <position position="23"/>
    </location>
</feature>
<feature type="glycosylation site" description="N-linked (GlcNAc...) asparagine" evidence="1">
    <location>
        <position position="105"/>
    </location>
</feature>
<feature type="disulfide bond" evidence="2">
    <location>
        <begin position="117"/>
        <end position="194"/>
    </location>
</feature>
<name>GNRR2_CLAGA</name>
<comment type="function">
    <text>Receptor for gonadotropin releasing hormone II (GnRH II). This receptor mediates its action by association with G proteins that activate a phosphatidylinositol-calcium second messenger system.</text>
</comment>
<comment type="subcellular location">
    <subcellularLocation>
        <location>Cell membrane</location>
        <topology>Multi-pass membrane protein</topology>
    </subcellularLocation>
</comment>
<comment type="PTM">
    <text evidence="4">Phosphorylated on the C-terminal cytoplasmic tail.</text>
</comment>
<comment type="similarity">
    <text evidence="2">Belongs to the G-protein coupled receptor 1 family.</text>
</comment>
<accession>O42329</accession>
<keyword id="KW-1003">Cell membrane</keyword>
<keyword id="KW-1015">Disulfide bond</keyword>
<keyword id="KW-0297">G-protein coupled receptor</keyword>
<keyword id="KW-0325">Glycoprotein</keyword>
<keyword id="KW-0472">Membrane</keyword>
<keyword id="KW-0597">Phosphoprotein</keyword>
<keyword id="KW-0675">Receptor</keyword>
<keyword id="KW-0807">Transducer</keyword>
<keyword id="KW-0812">Transmembrane</keyword>
<keyword id="KW-1133">Transmembrane helix</keyword>
<reference key="1">
    <citation type="journal article" date="1997" name="Eur. J. Biochem.">
        <title>Distinct efficacies for two endogenous ligands on a single cognate gonadoliberin receptor.</title>
        <authorList>
            <person name="Tensen C.P."/>
            <person name="Okuzawa K."/>
            <person name="Blomenroehr M."/>
            <person name="Rebers F.E.M."/>
            <person name="Leurs R."/>
            <person name="Bogerd J."/>
            <person name="Schulz R.W."/>
            <person name="Goos H.J.T."/>
        </authorList>
    </citation>
    <scope>NUCLEOTIDE SEQUENCE [MRNA]</scope>
    <source>
        <tissue>Pituitary</tissue>
    </source>
</reference>
<reference key="2">
    <citation type="submission" date="1999-09" db="EMBL/GenBank/DDBJ databases">
        <authorList>
            <person name="Bogerd J."/>
        </authorList>
    </citation>
    <scope>SEQUENCE REVISION TO 56</scope>
</reference>
<evidence type="ECO:0000255" key="1"/>
<evidence type="ECO:0000255" key="2">
    <source>
        <dbReference type="PROSITE-ProRule" id="PRU00521"/>
    </source>
</evidence>
<evidence type="ECO:0000256" key="3">
    <source>
        <dbReference type="SAM" id="MobiDB-lite"/>
    </source>
</evidence>
<evidence type="ECO:0000305" key="4"/>
<dbReference type="EMBL" id="X97497">
    <property type="protein sequence ID" value="CAA66128.2"/>
    <property type="molecule type" value="mRNA"/>
</dbReference>
<dbReference type="RefSeq" id="XP_053348467.1">
    <property type="nucleotide sequence ID" value="XM_053492492.1"/>
</dbReference>
<dbReference type="SMR" id="O42329"/>
<dbReference type="GeneID" id="128519004"/>
<dbReference type="OrthoDB" id="6022667at2759"/>
<dbReference type="GO" id="GO:0005886">
    <property type="term" value="C:plasma membrane"/>
    <property type="evidence" value="ECO:0007669"/>
    <property type="project" value="UniProtKB-SubCell"/>
</dbReference>
<dbReference type="GO" id="GO:0004930">
    <property type="term" value="F:G protein-coupled receptor activity"/>
    <property type="evidence" value="ECO:0007669"/>
    <property type="project" value="UniProtKB-KW"/>
</dbReference>
<dbReference type="GO" id="GO:0042277">
    <property type="term" value="F:peptide binding"/>
    <property type="evidence" value="ECO:0007669"/>
    <property type="project" value="TreeGrafter"/>
</dbReference>
<dbReference type="GO" id="GO:0016500">
    <property type="term" value="F:protein-hormone receptor activity"/>
    <property type="evidence" value="ECO:0007669"/>
    <property type="project" value="InterPro"/>
</dbReference>
<dbReference type="GO" id="GO:0032870">
    <property type="term" value="P:cellular response to hormone stimulus"/>
    <property type="evidence" value="ECO:0007669"/>
    <property type="project" value="TreeGrafter"/>
</dbReference>
<dbReference type="CDD" id="cd15383">
    <property type="entry name" value="7tmA_GnRHR_vertebrate"/>
    <property type="match status" value="1"/>
</dbReference>
<dbReference type="FunFam" id="1.20.1070.10:FF:000199">
    <property type="entry name" value="Gonadotropin-releasing hormone II receptor"/>
    <property type="match status" value="1"/>
</dbReference>
<dbReference type="Gene3D" id="1.20.1070.10">
    <property type="entry name" value="Rhodopsin 7-helix transmembrane proteins"/>
    <property type="match status" value="1"/>
</dbReference>
<dbReference type="InterPro" id="IPR000276">
    <property type="entry name" value="GPCR_Rhodpsn"/>
</dbReference>
<dbReference type="InterPro" id="IPR017452">
    <property type="entry name" value="GPCR_Rhodpsn_7TM"/>
</dbReference>
<dbReference type="InterPro" id="IPR001658">
    <property type="entry name" value="GphnRH_fam_rcpt"/>
</dbReference>
<dbReference type="PANTHER" id="PTHR24241:SF183">
    <property type="entry name" value="GONADOTROPIN RELEASING HORMONE RECEPTOR"/>
    <property type="match status" value="1"/>
</dbReference>
<dbReference type="PANTHER" id="PTHR24241">
    <property type="entry name" value="NEUROPEPTIDE RECEPTOR-RELATED G-PROTEIN COUPLED RECEPTOR"/>
    <property type="match status" value="1"/>
</dbReference>
<dbReference type="Pfam" id="PF00001">
    <property type="entry name" value="7tm_1"/>
    <property type="match status" value="1"/>
</dbReference>
<dbReference type="PRINTS" id="PR00529">
    <property type="entry name" value="GNADOTRPHINR"/>
</dbReference>
<dbReference type="PRINTS" id="PR00237">
    <property type="entry name" value="GPCRRHODOPSN"/>
</dbReference>
<dbReference type="SUPFAM" id="SSF81321">
    <property type="entry name" value="Family A G protein-coupled receptor-like"/>
    <property type="match status" value="1"/>
</dbReference>
<dbReference type="PROSITE" id="PS00237">
    <property type="entry name" value="G_PROTEIN_RECEP_F1_1"/>
    <property type="match status" value="1"/>
</dbReference>
<dbReference type="PROSITE" id="PS50262">
    <property type="entry name" value="G_PROTEIN_RECEP_F1_2"/>
    <property type="match status" value="1"/>
</dbReference>
<organism>
    <name type="scientific">Clarias gariepinus</name>
    <name type="common">North African catfish</name>
    <name type="synonym">Silurus gariepinus</name>
    <dbReference type="NCBI Taxonomy" id="13013"/>
    <lineage>
        <taxon>Eukaryota</taxon>
        <taxon>Metazoa</taxon>
        <taxon>Chordata</taxon>
        <taxon>Craniata</taxon>
        <taxon>Vertebrata</taxon>
        <taxon>Euteleostomi</taxon>
        <taxon>Actinopterygii</taxon>
        <taxon>Neopterygii</taxon>
        <taxon>Teleostei</taxon>
        <taxon>Ostariophysi</taxon>
        <taxon>Siluriformes</taxon>
        <taxon>Clariidae</taxon>
        <taxon>Clarias</taxon>
    </lineage>
</organism>
<sequence>MSGNTTLLLSNPTNVLDNSSVLNVSVSPPVLKWETPTFTTAARFRVAATLVLFVFAAASNLSVLLSVTRGRGRRLASHLRPLIASLASADLVMTFVVMPLDAVWNVTVQWYAGDAMCKLMCFLKLFAMHSAAFILVVVSLDRHHAILHPLDTLDAGRRNRRMLLTAWILSLLLASPQLFIFRAIKAKGVDFVQCATHGSFQQHWQETAYNMFHFVTLYVFPLLVMSLCYTRILVEINRQMHRSKDKAGEPCLRRSGTDMIPKARMKTLKMTIIIVASFVICWTPYYLLGIWYWFQPQMLHVIPDYVHHVFFVFGNLNTCCDPVIYGFFTPSFRADLSRCFCWRNQNASAKSLPHFSGHRREVSGEAESDLGSGDQPSGQ</sequence>
<protein>
    <recommendedName>
        <fullName>Gonadotropin-releasing hormone II receptor</fullName>
        <shortName>GnRH II receptor</shortName>
        <shortName>GnRH-II-R</shortName>
    </recommendedName>
    <alternativeName>
        <fullName>Type II GnRH receptor</fullName>
    </alternativeName>
</protein>
<proteinExistence type="evidence at transcript level"/>